<sequence>MYKNIKKFKLESFIAQEIGNLIVSGGIKDPRIHSFLTVVKVEFSKDLINAKVFMGSIKEGASLDNAVKALNNAKGFIQSQIIKRIKVRSTPKLLFVKDDSLSKSFYVNKLIEGLNTTREN</sequence>
<organism>
    <name type="scientific">Borreliella burgdorferi (strain ATCC 35210 / DSM 4680 / CIP 102532 / B31)</name>
    <name type="common">Borrelia burgdorferi</name>
    <dbReference type="NCBI Taxonomy" id="224326"/>
    <lineage>
        <taxon>Bacteria</taxon>
        <taxon>Pseudomonadati</taxon>
        <taxon>Spirochaetota</taxon>
        <taxon>Spirochaetia</taxon>
        <taxon>Spirochaetales</taxon>
        <taxon>Borreliaceae</taxon>
        <taxon>Borreliella</taxon>
    </lineage>
</organism>
<feature type="chain" id="PRO_0000102627" description="Ribosome-binding factor A">
    <location>
        <begin position="1"/>
        <end position="120"/>
    </location>
</feature>
<accession>O51742</accession>
<proteinExistence type="inferred from homology"/>
<protein>
    <recommendedName>
        <fullName evidence="1">Ribosome-binding factor A</fullName>
    </recommendedName>
</protein>
<keyword id="KW-0963">Cytoplasm</keyword>
<keyword id="KW-1185">Reference proteome</keyword>
<keyword id="KW-0690">Ribosome biogenesis</keyword>
<reference key="1">
    <citation type="journal article" date="1997" name="Nature">
        <title>Genomic sequence of a Lyme disease spirochaete, Borrelia burgdorferi.</title>
        <authorList>
            <person name="Fraser C.M."/>
            <person name="Casjens S."/>
            <person name="Huang W.M."/>
            <person name="Sutton G.G."/>
            <person name="Clayton R.A."/>
            <person name="Lathigra R."/>
            <person name="White O."/>
            <person name="Ketchum K.A."/>
            <person name="Dodson R.J."/>
            <person name="Hickey E.K."/>
            <person name="Gwinn M.L."/>
            <person name="Dougherty B.A."/>
            <person name="Tomb J.-F."/>
            <person name="Fleischmann R.D."/>
            <person name="Richardson D.L."/>
            <person name="Peterson J.D."/>
            <person name="Kerlavage A.R."/>
            <person name="Quackenbush J."/>
            <person name="Salzberg S.L."/>
            <person name="Hanson M."/>
            <person name="van Vugt R."/>
            <person name="Palmer N."/>
            <person name="Adams M.D."/>
            <person name="Gocayne J.D."/>
            <person name="Weidman J.F."/>
            <person name="Utterback T.R."/>
            <person name="Watthey L."/>
            <person name="McDonald L.A."/>
            <person name="Artiach P."/>
            <person name="Bowman C."/>
            <person name="Garland S.A."/>
            <person name="Fujii C."/>
            <person name="Cotton M.D."/>
            <person name="Horst K."/>
            <person name="Roberts K.M."/>
            <person name="Hatch B."/>
            <person name="Smith H.O."/>
            <person name="Venter J.C."/>
        </authorList>
    </citation>
    <scope>NUCLEOTIDE SEQUENCE [LARGE SCALE GENOMIC DNA]</scope>
    <source>
        <strain>ATCC 35210 / DSM 4680 / CIP 102532 / B31</strain>
    </source>
</reference>
<gene>
    <name evidence="1" type="primary">rbfA</name>
    <name type="ordered locus">BB_0802</name>
</gene>
<comment type="function">
    <text evidence="1">One of several proteins that assist in the late maturation steps of the functional core of the 30S ribosomal subunit. Associates with free 30S ribosomal subunits (but not with 30S subunits that are part of 70S ribosomes or polysomes). Required for efficient processing of 16S rRNA. May interact with the 5'-terminal helix region of 16S rRNA.</text>
</comment>
<comment type="subunit">
    <text evidence="1">Monomer. Binds 30S ribosomal subunits, but not 50S ribosomal subunits or 70S ribosomes.</text>
</comment>
<comment type="subcellular location">
    <subcellularLocation>
        <location evidence="1">Cytoplasm</location>
    </subcellularLocation>
</comment>
<comment type="similarity">
    <text evidence="1">Belongs to the RbfA family.</text>
</comment>
<evidence type="ECO:0000255" key="1">
    <source>
        <dbReference type="HAMAP-Rule" id="MF_00003"/>
    </source>
</evidence>
<name>RBFA_BORBU</name>
<dbReference type="EMBL" id="AE000783">
    <property type="protein sequence ID" value="AAC67152.2"/>
    <property type="molecule type" value="Genomic_DNA"/>
</dbReference>
<dbReference type="PIR" id="A70200">
    <property type="entry name" value="A70200"/>
</dbReference>
<dbReference type="RefSeq" id="NP_212936.2">
    <property type="nucleotide sequence ID" value="NC_001318.1"/>
</dbReference>
<dbReference type="RefSeq" id="WP_002657228.1">
    <property type="nucleotide sequence ID" value="NC_001318.1"/>
</dbReference>
<dbReference type="SMR" id="O51742"/>
<dbReference type="STRING" id="224326.BB_0802"/>
<dbReference type="PaxDb" id="224326-BB_0802"/>
<dbReference type="EnsemblBacteria" id="AAC67152">
    <property type="protein sequence ID" value="AAC67152"/>
    <property type="gene ID" value="BB_0802"/>
</dbReference>
<dbReference type="GeneID" id="56567381"/>
<dbReference type="KEGG" id="bbu:BB_0802"/>
<dbReference type="PATRIC" id="fig|224326.49.peg.1194"/>
<dbReference type="HOGENOM" id="CLU_089475_6_5_12"/>
<dbReference type="OrthoDB" id="370444at2"/>
<dbReference type="Proteomes" id="UP000001807">
    <property type="component" value="Chromosome"/>
</dbReference>
<dbReference type="GO" id="GO:0005829">
    <property type="term" value="C:cytosol"/>
    <property type="evidence" value="ECO:0007669"/>
    <property type="project" value="TreeGrafter"/>
</dbReference>
<dbReference type="GO" id="GO:0043024">
    <property type="term" value="F:ribosomal small subunit binding"/>
    <property type="evidence" value="ECO:0007669"/>
    <property type="project" value="TreeGrafter"/>
</dbReference>
<dbReference type="GO" id="GO:0030490">
    <property type="term" value="P:maturation of SSU-rRNA"/>
    <property type="evidence" value="ECO:0007669"/>
    <property type="project" value="UniProtKB-UniRule"/>
</dbReference>
<dbReference type="Gene3D" id="3.30.300.20">
    <property type="match status" value="1"/>
</dbReference>
<dbReference type="HAMAP" id="MF_00003">
    <property type="entry name" value="RbfA"/>
    <property type="match status" value="1"/>
</dbReference>
<dbReference type="InterPro" id="IPR015946">
    <property type="entry name" value="KH_dom-like_a/b"/>
</dbReference>
<dbReference type="InterPro" id="IPR000238">
    <property type="entry name" value="RbfA"/>
</dbReference>
<dbReference type="InterPro" id="IPR023799">
    <property type="entry name" value="RbfA_dom_sf"/>
</dbReference>
<dbReference type="InterPro" id="IPR020053">
    <property type="entry name" value="Ribosome-bd_factorA_CS"/>
</dbReference>
<dbReference type="NCBIfam" id="TIGR00082">
    <property type="entry name" value="rbfA"/>
    <property type="match status" value="1"/>
</dbReference>
<dbReference type="PANTHER" id="PTHR33515">
    <property type="entry name" value="RIBOSOME-BINDING FACTOR A, CHLOROPLASTIC-RELATED"/>
    <property type="match status" value="1"/>
</dbReference>
<dbReference type="PANTHER" id="PTHR33515:SF1">
    <property type="entry name" value="RIBOSOME-BINDING FACTOR A, CHLOROPLASTIC-RELATED"/>
    <property type="match status" value="1"/>
</dbReference>
<dbReference type="Pfam" id="PF02033">
    <property type="entry name" value="RBFA"/>
    <property type="match status" value="1"/>
</dbReference>
<dbReference type="SUPFAM" id="SSF89919">
    <property type="entry name" value="Ribosome-binding factor A, RbfA"/>
    <property type="match status" value="1"/>
</dbReference>
<dbReference type="PROSITE" id="PS01319">
    <property type="entry name" value="RBFA"/>
    <property type="match status" value="1"/>
</dbReference>